<reference key="1">
    <citation type="submission" date="2008-12" db="EMBL/GenBank/DDBJ databases">
        <title>Complete sequence of chromosome of Shewanella baltica OS223.</title>
        <authorList>
            <consortium name="US DOE Joint Genome Institute"/>
            <person name="Lucas S."/>
            <person name="Copeland A."/>
            <person name="Lapidus A."/>
            <person name="Glavina del Rio T."/>
            <person name="Dalin E."/>
            <person name="Tice H."/>
            <person name="Bruce D."/>
            <person name="Goodwin L."/>
            <person name="Pitluck S."/>
            <person name="Chertkov O."/>
            <person name="Meincke L."/>
            <person name="Brettin T."/>
            <person name="Detter J.C."/>
            <person name="Han C."/>
            <person name="Kuske C.R."/>
            <person name="Larimer F."/>
            <person name="Land M."/>
            <person name="Hauser L."/>
            <person name="Kyrpides N."/>
            <person name="Ovchinnikova G."/>
            <person name="Brettar I."/>
            <person name="Rodrigues J."/>
            <person name="Konstantinidis K."/>
            <person name="Tiedje J."/>
        </authorList>
    </citation>
    <scope>NUCLEOTIDE SEQUENCE [LARGE SCALE GENOMIC DNA]</scope>
    <source>
        <strain>OS223</strain>
    </source>
</reference>
<name>SMRB_SHEB2</name>
<proteinExistence type="inferred from homology"/>
<organism>
    <name type="scientific">Shewanella baltica (strain OS223)</name>
    <dbReference type="NCBI Taxonomy" id="407976"/>
    <lineage>
        <taxon>Bacteria</taxon>
        <taxon>Pseudomonadati</taxon>
        <taxon>Pseudomonadota</taxon>
        <taxon>Gammaproteobacteria</taxon>
        <taxon>Alteromonadales</taxon>
        <taxon>Shewanellaceae</taxon>
        <taxon>Shewanella</taxon>
    </lineage>
</organism>
<protein>
    <recommendedName>
        <fullName evidence="1">Ribosome rescue factor SmrB</fullName>
        <ecNumber evidence="1">3.1.-.-</ecNumber>
    </recommendedName>
</protein>
<gene>
    <name evidence="1" type="primary">smrB</name>
    <name type="ordered locus">Sbal223_1605</name>
</gene>
<accession>B8EEA5</accession>
<keyword id="KW-0255">Endonuclease</keyword>
<keyword id="KW-0378">Hydrolase</keyword>
<keyword id="KW-0540">Nuclease</keyword>
<keyword id="KW-0694">RNA-binding</keyword>
<keyword id="KW-0699">rRNA-binding</keyword>
<feature type="chain" id="PRO_1000149558" description="Ribosome rescue factor SmrB">
    <location>
        <begin position="1"/>
        <end position="176"/>
    </location>
</feature>
<feature type="domain" description="Smr" evidence="1">
    <location>
        <begin position="93"/>
        <end position="168"/>
    </location>
</feature>
<sequence length="176" mass="20171">MNKDDDKEGLAMFSALIDGIKPITQNKRHFRTPLKTKQEIELKEQQLHANSYFSDTYQPLLPVQGPMRWLEEGVDSLELKRLRRGDYQPDLLLDLHGYRQSEAKLELAALIQACVKQQSLCCCIMHGYGSGILKQQVPMWLVQHPMVKAFHQAPKEWGGDAALLVLIDIGEQPHRR</sequence>
<evidence type="ECO:0000255" key="1">
    <source>
        <dbReference type="HAMAP-Rule" id="MF_01042"/>
    </source>
</evidence>
<comment type="function">
    <text evidence="1">Acts as a ribosome collision sensor. Detects stalled/collided disomes (pairs of ribosomes where the leading ribosome is stalled and a second ribosome has collided with it) and endonucleolytically cleaves mRNA at the 5' boundary of the stalled ribosome. Stalled/collided disomes form a new interface (primarily via the 30S subunits) that binds SmrB. Cleaved mRNA becomes available for tmRNA ligation, leading to ribosomal subunit dissociation and rescue of stalled ribosomes.</text>
</comment>
<comment type="subunit">
    <text evidence="1">Associates with collided ribosomes, but not with correctly translating polysomes.</text>
</comment>
<comment type="similarity">
    <text evidence="1">Belongs to the SmrB family.</text>
</comment>
<dbReference type="EC" id="3.1.-.-" evidence="1"/>
<dbReference type="EMBL" id="CP001252">
    <property type="protein sequence ID" value="ACK46110.1"/>
    <property type="molecule type" value="Genomic_DNA"/>
</dbReference>
<dbReference type="RefSeq" id="WP_006082235.1">
    <property type="nucleotide sequence ID" value="NC_011663.1"/>
</dbReference>
<dbReference type="SMR" id="B8EEA5"/>
<dbReference type="KEGG" id="sbp:Sbal223_1605"/>
<dbReference type="HOGENOM" id="CLU_055978_4_0_6"/>
<dbReference type="Proteomes" id="UP000002507">
    <property type="component" value="Chromosome"/>
</dbReference>
<dbReference type="GO" id="GO:0004521">
    <property type="term" value="F:RNA endonuclease activity"/>
    <property type="evidence" value="ECO:0007669"/>
    <property type="project" value="UniProtKB-UniRule"/>
</dbReference>
<dbReference type="GO" id="GO:0019843">
    <property type="term" value="F:rRNA binding"/>
    <property type="evidence" value="ECO:0007669"/>
    <property type="project" value="UniProtKB-UniRule"/>
</dbReference>
<dbReference type="GO" id="GO:0072344">
    <property type="term" value="P:rescue of stalled ribosome"/>
    <property type="evidence" value="ECO:0007669"/>
    <property type="project" value="UniProtKB-UniRule"/>
</dbReference>
<dbReference type="Gene3D" id="3.30.1370.110">
    <property type="match status" value="1"/>
</dbReference>
<dbReference type="HAMAP" id="MF_01042">
    <property type="entry name" value="SmrB"/>
    <property type="match status" value="1"/>
</dbReference>
<dbReference type="InterPro" id="IPR002625">
    <property type="entry name" value="Smr_dom"/>
</dbReference>
<dbReference type="InterPro" id="IPR036063">
    <property type="entry name" value="Smr_dom_sf"/>
</dbReference>
<dbReference type="InterPro" id="IPR022990">
    <property type="entry name" value="SmrB-like"/>
</dbReference>
<dbReference type="NCBIfam" id="NF003432">
    <property type="entry name" value="PRK04946.1"/>
    <property type="match status" value="1"/>
</dbReference>
<dbReference type="PANTHER" id="PTHR35562">
    <property type="entry name" value="DNA ENDONUCLEASE SMRA-RELATED"/>
    <property type="match status" value="1"/>
</dbReference>
<dbReference type="PANTHER" id="PTHR35562:SF1">
    <property type="entry name" value="UPF0115 PROTEIN YFCN"/>
    <property type="match status" value="1"/>
</dbReference>
<dbReference type="Pfam" id="PF01713">
    <property type="entry name" value="Smr"/>
    <property type="match status" value="1"/>
</dbReference>
<dbReference type="SMART" id="SM00463">
    <property type="entry name" value="SMR"/>
    <property type="match status" value="1"/>
</dbReference>
<dbReference type="SUPFAM" id="SSF160443">
    <property type="entry name" value="SMR domain-like"/>
    <property type="match status" value="1"/>
</dbReference>
<dbReference type="PROSITE" id="PS50828">
    <property type="entry name" value="SMR"/>
    <property type="match status" value="1"/>
</dbReference>